<name>YO134_YEAST</name>
<reference key="1">
    <citation type="journal article" date="1996" name="Yeast">
        <title>Sequence analysis of a 12 801 bp fragment of the left arm of yeast chromosome XV containing a putative 6-phosphofructo-2-kinase gene, a gene for a possible glycophospholipid-anchored surface protein and six other open reading frames.</title>
        <authorList>
            <person name="Aldea M."/>
            <person name="Piedrafita L."/>
            <person name="Casas C."/>
            <person name="Casamayor A."/>
            <person name="Khalid H."/>
            <person name="Balcells L."/>
            <person name="Arino J."/>
            <person name="Herrero E."/>
        </authorList>
    </citation>
    <scope>NUCLEOTIDE SEQUENCE [GENOMIC DNA]</scope>
    <source>
        <strain>ATCC 96604 / S288c / FY1679</strain>
    </source>
</reference>
<reference key="2">
    <citation type="journal article" date="1997" name="Nature">
        <title>The nucleotide sequence of Saccharomyces cerevisiae chromosome XV.</title>
        <authorList>
            <person name="Dujon B."/>
            <person name="Albermann K."/>
            <person name="Aldea M."/>
            <person name="Alexandraki D."/>
            <person name="Ansorge W."/>
            <person name="Arino J."/>
            <person name="Benes V."/>
            <person name="Bohn C."/>
            <person name="Bolotin-Fukuhara M."/>
            <person name="Bordonne R."/>
            <person name="Boyer J."/>
            <person name="Camasses A."/>
            <person name="Casamayor A."/>
            <person name="Casas C."/>
            <person name="Cheret G."/>
            <person name="Cziepluch C."/>
            <person name="Daignan-Fornier B."/>
            <person name="Dang V.-D."/>
            <person name="de Haan M."/>
            <person name="Delius H."/>
            <person name="Durand P."/>
            <person name="Fairhead C."/>
            <person name="Feldmann H."/>
            <person name="Gaillon L."/>
            <person name="Galisson F."/>
            <person name="Gamo F.-J."/>
            <person name="Gancedo C."/>
            <person name="Goffeau A."/>
            <person name="Goulding S.E."/>
            <person name="Grivell L.A."/>
            <person name="Habbig B."/>
            <person name="Hand N.J."/>
            <person name="Hani J."/>
            <person name="Hattenhorst U."/>
            <person name="Hebling U."/>
            <person name="Hernando Y."/>
            <person name="Herrero E."/>
            <person name="Heumann K."/>
            <person name="Hiesel R."/>
            <person name="Hilger F."/>
            <person name="Hofmann B."/>
            <person name="Hollenberg C.P."/>
            <person name="Hughes B."/>
            <person name="Jauniaux J.-C."/>
            <person name="Kalogeropoulos A."/>
            <person name="Katsoulou C."/>
            <person name="Kordes E."/>
            <person name="Lafuente M.J."/>
            <person name="Landt O."/>
            <person name="Louis E.J."/>
            <person name="Maarse A.C."/>
            <person name="Madania A."/>
            <person name="Mannhaupt G."/>
            <person name="Marck C."/>
            <person name="Martin R.P."/>
            <person name="Mewes H.-W."/>
            <person name="Michaux G."/>
            <person name="Paces V."/>
            <person name="Parle-McDermott A.G."/>
            <person name="Pearson B.M."/>
            <person name="Perrin A."/>
            <person name="Pettersson B."/>
            <person name="Poch O."/>
            <person name="Pohl T.M."/>
            <person name="Poirey R."/>
            <person name="Portetelle D."/>
            <person name="Pujol A."/>
            <person name="Purnelle B."/>
            <person name="Ramezani Rad M."/>
            <person name="Rechmann S."/>
            <person name="Schwager C."/>
            <person name="Schweizer M."/>
            <person name="Sor F."/>
            <person name="Sterky F."/>
            <person name="Tarassov I.A."/>
            <person name="Teodoru C."/>
            <person name="Tettelin H."/>
            <person name="Thierry A."/>
            <person name="Tobiasch E."/>
            <person name="Tzermia M."/>
            <person name="Uhlen M."/>
            <person name="Unseld M."/>
            <person name="Valens M."/>
            <person name="Vandenbol M."/>
            <person name="Vetter I."/>
            <person name="Vlcek C."/>
            <person name="Voet M."/>
            <person name="Volckaert G."/>
            <person name="Voss H."/>
            <person name="Wambutt R."/>
            <person name="Wedler H."/>
            <person name="Wiemann S."/>
            <person name="Winsor B."/>
            <person name="Wolfe K.H."/>
            <person name="Zollner A."/>
            <person name="Zumstein E."/>
            <person name="Kleine K."/>
        </authorList>
    </citation>
    <scope>NUCLEOTIDE SEQUENCE [LARGE SCALE GENOMIC DNA]</scope>
    <source>
        <strain>ATCC 204508 / S288c</strain>
    </source>
</reference>
<reference key="3">
    <citation type="journal article" date="2014" name="G3 (Bethesda)">
        <title>The reference genome sequence of Saccharomyces cerevisiae: Then and now.</title>
        <authorList>
            <person name="Engel S.R."/>
            <person name="Dietrich F.S."/>
            <person name="Fisk D.G."/>
            <person name="Binkley G."/>
            <person name="Balakrishnan R."/>
            <person name="Costanzo M.C."/>
            <person name="Dwight S.S."/>
            <person name="Hitz B.C."/>
            <person name="Karra K."/>
            <person name="Nash R.S."/>
            <person name="Weng S."/>
            <person name="Wong E.D."/>
            <person name="Lloyd P."/>
            <person name="Skrzypek M.S."/>
            <person name="Miyasato S.R."/>
            <person name="Simison M."/>
            <person name="Cherry J.M."/>
        </authorList>
    </citation>
    <scope>GENOME REANNOTATION</scope>
    <source>
        <strain>ATCC 204508 / S288c</strain>
    </source>
</reference>
<organism>
    <name type="scientific">Saccharomyces cerevisiae (strain ATCC 204508 / S288c)</name>
    <name type="common">Baker's yeast</name>
    <dbReference type="NCBI Taxonomy" id="559292"/>
    <lineage>
        <taxon>Eukaryota</taxon>
        <taxon>Fungi</taxon>
        <taxon>Dikarya</taxon>
        <taxon>Ascomycota</taxon>
        <taxon>Saccharomycotina</taxon>
        <taxon>Saccharomycetes</taxon>
        <taxon>Saccharomycetales</taxon>
        <taxon>Saccharomycetaceae</taxon>
        <taxon>Saccharomyces</taxon>
    </lineage>
</organism>
<gene>
    <name type="ordered locus">YOL134C</name>
    <name type="ORF">AOE129</name>
    <name type="ORF">O0508</name>
</gene>
<protein>
    <recommendedName>
        <fullName>Putative uncharacterized protein YOL134C</fullName>
    </recommendedName>
</protein>
<keyword id="KW-0472">Membrane</keyword>
<keyword id="KW-0732">Signal</keyword>
<keyword id="KW-0812">Transmembrane</keyword>
<keyword id="KW-1133">Transmembrane helix</keyword>
<accession>Q08272</accession>
<feature type="signal peptide" evidence="1">
    <location>
        <begin position="1"/>
        <end position="24"/>
    </location>
</feature>
<feature type="chain" id="PRO_0000299696" description="Putative uncharacterized protein YOL134C">
    <location>
        <begin position="25"/>
        <end position="129"/>
    </location>
</feature>
<feature type="transmembrane region" description="Helical" evidence="1">
    <location>
        <begin position="38"/>
        <end position="58"/>
    </location>
</feature>
<feature type="transmembrane region" description="Helical" evidence="1">
    <location>
        <begin position="95"/>
        <end position="115"/>
    </location>
</feature>
<evidence type="ECO:0000255" key="1"/>
<evidence type="ECO:0000305" key="2"/>
<evidence type="ECO:0000305" key="3">
    <source>
    </source>
</evidence>
<proteinExistence type="uncertain"/>
<comment type="subcellular location">
    <subcellularLocation>
        <location evidence="2">Membrane</location>
        <topology evidence="2">Multi-pass membrane protein</topology>
    </subcellularLocation>
</comment>
<comment type="miscellaneous">
    <text evidence="2">Partially overlaps HRT1.</text>
</comment>
<comment type="caution">
    <text evidence="3">Product of a dubious gene prediction unlikely to encode a functional protein. Because of that it is not part of the S.cerevisiae S288c complete/reference proteome set.</text>
</comment>
<sequence>MAFGWHSMHGSIIWFLQIAQLSTAISHDQNATAVHFLISNLFFLVSTGALWFELCAIFCDSSSSTSILSTSLLMLNYFSLKFSATGERHLVATNIAHIEAHTSIVGFMISLFTPLKETIITKYEMLVRT</sequence>
<dbReference type="EMBL" id="X95465">
    <property type="protein sequence ID" value="CAA64735.1"/>
    <property type="molecule type" value="Genomic_DNA"/>
</dbReference>
<dbReference type="EMBL" id="Z74876">
    <property type="protein sequence ID" value="CAA99154.1"/>
    <property type="molecule type" value="Genomic_DNA"/>
</dbReference>
<dbReference type="PIR" id="S66831">
    <property type="entry name" value="S66831"/>
</dbReference>
<dbReference type="SMR" id="Q08272"/>
<dbReference type="STRING" id="4932.YOL134C"/>
<dbReference type="PaxDb" id="4932-YOL134C"/>
<dbReference type="EnsemblFungi" id="YOL134C_mRNA">
    <property type="protein sequence ID" value="YOL134C"/>
    <property type="gene ID" value="YOL134C"/>
</dbReference>
<dbReference type="AGR" id="SGD:S000005494"/>
<dbReference type="SGD" id="S000005494">
    <property type="gene designation" value="YOL134C"/>
</dbReference>
<dbReference type="HOGENOM" id="CLU_1950506_0_0_1"/>
<dbReference type="GO" id="GO:0016020">
    <property type="term" value="C:membrane"/>
    <property type="evidence" value="ECO:0007669"/>
    <property type="project" value="UniProtKB-SubCell"/>
</dbReference>